<proteinExistence type="inferred from homology"/>
<evidence type="ECO:0000255" key="1">
    <source>
        <dbReference type="HAMAP-Rule" id="MF_00657"/>
    </source>
</evidence>
<dbReference type="EC" id="1.14.11.-" evidence="1"/>
<dbReference type="EMBL" id="CP000269">
    <property type="protein sequence ID" value="ABR88875.1"/>
    <property type="molecule type" value="Genomic_DNA"/>
</dbReference>
<dbReference type="RefSeq" id="WP_012081454.1">
    <property type="nucleotide sequence ID" value="NC_009659.1"/>
</dbReference>
<dbReference type="SMR" id="A6T461"/>
<dbReference type="STRING" id="375286.mma_3618"/>
<dbReference type="KEGG" id="mms:mma_3618"/>
<dbReference type="eggNOG" id="COG3128">
    <property type="taxonomic scope" value="Bacteria"/>
</dbReference>
<dbReference type="HOGENOM" id="CLU_106663_0_0_4"/>
<dbReference type="OrthoDB" id="9812472at2"/>
<dbReference type="Proteomes" id="UP000006388">
    <property type="component" value="Chromosome"/>
</dbReference>
<dbReference type="GO" id="GO:0016706">
    <property type="term" value="F:2-oxoglutarate-dependent dioxygenase activity"/>
    <property type="evidence" value="ECO:0007669"/>
    <property type="project" value="UniProtKB-UniRule"/>
</dbReference>
<dbReference type="GO" id="GO:0005506">
    <property type="term" value="F:iron ion binding"/>
    <property type="evidence" value="ECO:0007669"/>
    <property type="project" value="UniProtKB-UniRule"/>
</dbReference>
<dbReference type="GO" id="GO:0031418">
    <property type="term" value="F:L-ascorbic acid binding"/>
    <property type="evidence" value="ECO:0007669"/>
    <property type="project" value="UniProtKB-KW"/>
</dbReference>
<dbReference type="GO" id="GO:0006974">
    <property type="term" value="P:DNA damage response"/>
    <property type="evidence" value="ECO:0007669"/>
    <property type="project" value="TreeGrafter"/>
</dbReference>
<dbReference type="GO" id="GO:0006879">
    <property type="term" value="P:intracellular iron ion homeostasis"/>
    <property type="evidence" value="ECO:0007669"/>
    <property type="project" value="TreeGrafter"/>
</dbReference>
<dbReference type="Gene3D" id="2.60.120.620">
    <property type="entry name" value="q2cbj1_9rhob like domain"/>
    <property type="match status" value="1"/>
</dbReference>
<dbReference type="Gene3D" id="4.10.860.20">
    <property type="entry name" value="Rabenosyn, Rab binding domain"/>
    <property type="match status" value="1"/>
</dbReference>
<dbReference type="HAMAP" id="MF_00657">
    <property type="entry name" value="Hydroxyl_YbiX"/>
    <property type="match status" value="1"/>
</dbReference>
<dbReference type="InterPro" id="IPR005123">
    <property type="entry name" value="Oxoglu/Fe-dep_dioxygenase_dom"/>
</dbReference>
<dbReference type="InterPro" id="IPR041097">
    <property type="entry name" value="PKHD_C"/>
</dbReference>
<dbReference type="InterPro" id="IPR023550">
    <property type="entry name" value="PKHD_hydroxylase"/>
</dbReference>
<dbReference type="InterPro" id="IPR006620">
    <property type="entry name" value="Pro_4_hyd_alph"/>
</dbReference>
<dbReference type="InterPro" id="IPR044862">
    <property type="entry name" value="Pro_4_hyd_alph_FE2OG_OXY"/>
</dbReference>
<dbReference type="NCBIfam" id="NF003974">
    <property type="entry name" value="PRK05467.1-3"/>
    <property type="match status" value="1"/>
</dbReference>
<dbReference type="NCBIfam" id="NF003975">
    <property type="entry name" value="PRK05467.1-4"/>
    <property type="match status" value="1"/>
</dbReference>
<dbReference type="PANTHER" id="PTHR41536">
    <property type="entry name" value="PKHD-TYPE HYDROXYLASE YBIX"/>
    <property type="match status" value="1"/>
</dbReference>
<dbReference type="PANTHER" id="PTHR41536:SF1">
    <property type="entry name" value="PKHD-TYPE HYDROXYLASE YBIX"/>
    <property type="match status" value="1"/>
</dbReference>
<dbReference type="Pfam" id="PF13640">
    <property type="entry name" value="2OG-FeII_Oxy_3"/>
    <property type="match status" value="1"/>
</dbReference>
<dbReference type="Pfam" id="PF18331">
    <property type="entry name" value="PKHD_C"/>
    <property type="match status" value="1"/>
</dbReference>
<dbReference type="SMART" id="SM00702">
    <property type="entry name" value="P4Hc"/>
    <property type="match status" value="1"/>
</dbReference>
<dbReference type="SUPFAM" id="SSF51197">
    <property type="entry name" value="Clavaminate synthase-like"/>
    <property type="match status" value="1"/>
</dbReference>
<dbReference type="PROSITE" id="PS51471">
    <property type="entry name" value="FE2OG_OXY"/>
    <property type="match status" value="1"/>
</dbReference>
<keyword id="KW-0223">Dioxygenase</keyword>
<keyword id="KW-0408">Iron</keyword>
<keyword id="KW-0479">Metal-binding</keyword>
<keyword id="KW-0560">Oxidoreductase</keyword>
<keyword id="KW-0847">Vitamin C</keyword>
<reference key="1">
    <citation type="journal article" date="2007" name="PLoS Genet.">
        <title>Genome analysis of Minibacterium massiliensis highlights the convergent evolution of water-living bacteria.</title>
        <authorList>
            <person name="Audic S."/>
            <person name="Robert C."/>
            <person name="Campagna B."/>
            <person name="Parinello H."/>
            <person name="Claverie J.-M."/>
            <person name="Raoult D."/>
            <person name="Drancourt M."/>
        </authorList>
    </citation>
    <scope>NUCLEOTIDE SEQUENCE [LARGE SCALE GENOMIC DNA]</scope>
    <source>
        <strain>Marseille</strain>
    </source>
</reference>
<sequence>MMLHIPEVLTAAQVVEIRKTIDTAEWVDGKATVGAQGAKVKRNRQLPELSATGLKVGQEILKALAGHPLFVSAALPMRYMPPLFNRYEGGEHYGFHVDGSVRSIPGSNLSLRTDLSCTLFLSEPEEYEGGELVVADTYGEHAVKLPAGDMILYPASSVHKVEPVTHGARISSFFWVQSMVADDGKRGLLFELDQNIQKLRARLGDCEEIIGLTGHYHNLLRQWAMV</sequence>
<name>Y3618_JANMA</name>
<gene>
    <name type="ordered locus">mma_3618</name>
</gene>
<organism>
    <name type="scientific">Janthinobacterium sp. (strain Marseille)</name>
    <name type="common">Minibacterium massiliensis</name>
    <dbReference type="NCBI Taxonomy" id="375286"/>
    <lineage>
        <taxon>Bacteria</taxon>
        <taxon>Pseudomonadati</taxon>
        <taxon>Pseudomonadota</taxon>
        <taxon>Betaproteobacteria</taxon>
        <taxon>Burkholderiales</taxon>
        <taxon>Oxalobacteraceae</taxon>
        <taxon>Janthinobacterium</taxon>
    </lineage>
</organism>
<protein>
    <recommendedName>
        <fullName evidence="1">PKHD-type hydroxylase mma_3618</fullName>
        <ecNumber evidence="1">1.14.11.-</ecNumber>
    </recommendedName>
</protein>
<accession>A6T461</accession>
<feature type="chain" id="PRO_0000346487" description="PKHD-type hydroxylase mma_3618">
    <location>
        <begin position="1"/>
        <end position="226"/>
    </location>
</feature>
<feature type="domain" description="Fe2OG dioxygenase" evidence="1">
    <location>
        <begin position="78"/>
        <end position="178"/>
    </location>
</feature>
<feature type="binding site" evidence="1">
    <location>
        <position position="96"/>
    </location>
    <ligand>
        <name>Fe cation</name>
        <dbReference type="ChEBI" id="CHEBI:24875"/>
    </ligand>
</feature>
<feature type="binding site" evidence="1">
    <location>
        <position position="98"/>
    </location>
    <ligand>
        <name>Fe cation</name>
        <dbReference type="ChEBI" id="CHEBI:24875"/>
    </ligand>
</feature>
<feature type="binding site" evidence="1">
    <location>
        <position position="159"/>
    </location>
    <ligand>
        <name>Fe cation</name>
        <dbReference type="ChEBI" id="CHEBI:24875"/>
    </ligand>
</feature>
<feature type="binding site" evidence="1">
    <location>
        <position position="169"/>
    </location>
    <ligand>
        <name>2-oxoglutarate</name>
        <dbReference type="ChEBI" id="CHEBI:16810"/>
    </ligand>
</feature>
<comment type="cofactor">
    <cofactor evidence="1">
        <name>Fe(2+)</name>
        <dbReference type="ChEBI" id="CHEBI:29033"/>
    </cofactor>
    <text evidence="1">Binds 1 Fe(2+) ion per subunit.</text>
</comment>
<comment type="cofactor">
    <cofactor evidence="1">
        <name>L-ascorbate</name>
        <dbReference type="ChEBI" id="CHEBI:38290"/>
    </cofactor>
</comment>